<comment type="function">
    <text evidence="1">Participates in electron transfer between P700 and the cytochrome b6-f complex in photosystem I.</text>
</comment>
<comment type="cofactor">
    <cofactor evidence="1">
        <name>Cu(2+)</name>
        <dbReference type="ChEBI" id="CHEBI:29036"/>
    </cofactor>
</comment>
<comment type="subcellular location">
    <subcellularLocation>
        <location evidence="2">Plastid</location>
        <location evidence="2">Chloroplast thylakoid membrane</location>
        <topology evidence="1">Peripheral membrane protein</topology>
        <orientation evidence="1">Lumenal side</orientation>
    </subcellularLocation>
    <text>Loosely bound to the inner thylakoid membrane surface in chloroplasts and/or in the lumen (By similarity).</text>
</comment>
<comment type="miscellaneous">
    <text>The sequence shown is that of plastocyanin A'.</text>
</comment>
<comment type="similarity">
    <text evidence="3">Belongs to the plastocyanin family.</text>
</comment>
<dbReference type="PIR" id="S40485">
    <property type="entry name" value="S40485"/>
</dbReference>
<dbReference type="PIR" id="S40486">
    <property type="entry name" value="S40486"/>
</dbReference>
<dbReference type="SMR" id="P35476"/>
<dbReference type="STRING" id="4097.P35476"/>
<dbReference type="PaxDb" id="4097-P35476"/>
<dbReference type="Proteomes" id="UP000084051">
    <property type="component" value="Unplaced"/>
</dbReference>
<dbReference type="GO" id="GO:0009535">
    <property type="term" value="C:chloroplast thylakoid membrane"/>
    <property type="evidence" value="ECO:0007669"/>
    <property type="project" value="UniProtKB-SubCell"/>
</dbReference>
<dbReference type="GO" id="GO:0005507">
    <property type="term" value="F:copper ion binding"/>
    <property type="evidence" value="ECO:0007669"/>
    <property type="project" value="InterPro"/>
</dbReference>
<dbReference type="GO" id="GO:0009055">
    <property type="term" value="F:electron transfer activity"/>
    <property type="evidence" value="ECO:0007669"/>
    <property type="project" value="InterPro"/>
</dbReference>
<dbReference type="CDD" id="cd04219">
    <property type="entry name" value="Plastocyanin"/>
    <property type="match status" value="1"/>
</dbReference>
<dbReference type="Gene3D" id="2.60.40.420">
    <property type="entry name" value="Cupredoxins - blue copper proteins"/>
    <property type="match status" value="1"/>
</dbReference>
<dbReference type="InterPro" id="IPR000923">
    <property type="entry name" value="BlueCu_1"/>
</dbReference>
<dbReference type="InterPro" id="IPR028871">
    <property type="entry name" value="BlueCu_1_BS"/>
</dbReference>
<dbReference type="InterPro" id="IPR001235">
    <property type="entry name" value="Copper_blue_Plastocyanin"/>
</dbReference>
<dbReference type="InterPro" id="IPR008972">
    <property type="entry name" value="Cupredoxin"/>
</dbReference>
<dbReference type="InterPro" id="IPR002387">
    <property type="entry name" value="Plastocyanin"/>
</dbReference>
<dbReference type="NCBIfam" id="TIGR02656">
    <property type="entry name" value="cyanin_plasto"/>
    <property type="match status" value="1"/>
</dbReference>
<dbReference type="PANTHER" id="PTHR34192">
    <property type="entry name" value="PLASTOCYANIN MAJOR ISOFORM, CHLOROPLASTIC-RELATED"/>
    <property type="match status" value="1"/>
</dbReference>
<dbReference type="PANTHER" id="PTHR34192:SF10">
    <property type="entry name" value="PLASTOCYANIN MAJOR ISOFORM, CHLOROPLASTIC-RELATED"/>
    <property type="match status" value="1"/>
</dbReference>
<dbReference type="Pfam" id="PF00127">
    <property type="entry name" value="Copper-bind"/>
    <property type="match status" value="1"/>
</dbReference>
<dbReference type="PRINTS" id="PR00156">
    <property type="entry name" value="COPPERBLUE"/>
</dbReference>
<dbReference type="PRINTS" id="PR00157">
    <property type="entry name" value="PLASTOCYANIN"/>
</dbReference>
<dbReference type="SUPFAM" id="SSF49503">
    <property type="entry name" value="Cupredoxins"/>
    <property type="match status" value="1"/>
</dbReference>
<dbReference type="PROSITE" id="PS00196">
    <property type="entry name" value="COPPER_BLUE"/>
    <property type="match status" value="1"/>
</dbReference>
<sequence>IEVLLGSDDGGLAFVPGNFSVSAGEKITFKNNAGFPHNVVFDEDEIPAGVDVSKISMSEEEYLNGPGETYSVTLSEKGTYTFYCAPHQGAGMVGKVTVN</sequence>
<accession>P35476</accession>
<name>PLAS1_TOBAC</name>
<reference key="1">
    <citation type="journal article" date="1993" name="Biochim. Biophys. Acta">
        <title>Twin plastocyanin dimorphism in tobacco.</title>
        <authorList>
            <person name="Dimitrov M.I."/>
            <person name="Donchev A.A."/>
            <person name="Egorov T.A."/>
        </authorList>
    </citation>
    <scope>PROTEIN SEQUENCE</scope>
    <scope>SUBCELLULAR LOCATION</scope>
    <source>
        <strain>cv. Virginia</strain>
        <tissue>Leaf</tissue>
    </source>
</reference>
<feature type="chain" id="PRO_0000085576" description="Plastocyanin A'/A''">
    <location>
        <begin position="1"/>
        <end position="99"/>
    </location>
</feature>
<feature type="domain" description="Plastocyanin-like">
    <location>
        <begin position="1"/>
        <end position="99"/>
    </location>
</feature>
<feature type="binding site" evidence="1">
    <location>
        <position position="37"/>
    </location>
    <ligand>
        <name>Cu cation</name>
        <dbReference type="ChEBI" id="CHEBI:23378"/>
    </ligand>
</feature>
<feature type="binding site" evidence="1">
    <location>
        <position position="84"/>
    </location>
    <ligand>
        <name>Cu cation</name>
        <dbReference type="ChEBI" id="CHEBI:23378"/>
    </ligand>
</feature>
<feature type="binding site" evidence="1">
    <location>
        <position position="87"/>
    </location>
    <ligand>
        <name>Cu cation</name>
        <dbReference type="ChEBI" id="CHEBI:23378"/>
    </ligand>
</feature>
<feature type="binding site" evidence="1">
    <location>
        <position position="92"/>
    </location>
    <ligand>
        <name>Cu cation</name>
        <dbReference type="ChEBI" id="CHEBI:23378"/>
    </ligand>
</feature>
<feature type="sequence variant" description="In plastocyanin A''.">
    <original>S</original>
    <variation>P</variation>
    <location>
        <position position="58"/>
    </location>
</feature>
<proteinExistence type="evidence at protein level"/>
<protein>
    <recommendedName>
        <fullName>Plastocyanin A'/A''</fullName>
    </recommendedName>
</protein>
<organism>
    <name type="scientific">Nicotiana tabacum</name>
    <name type="common">Common tobacco</name>
    <dbReference type="NCBI Taxonomy" id="4097"/>
    <lineage>
        <taxon>Eukaryota</taxon>
        <taxon>Viridiplantae</taxon>
        <taxon>Streptophyta</taxon>
        <taxon>Embryophyta</taxon>
        <taxon>Tracheophyta</taxon>
        <taxon>Spermatophyta</taxon>
        <taxon>Magnoliopsida</taxon>
        <taxon>eudicotyledons</taxon>
        <taxon>Gunneridae</taxon>
        <taxon>Pentapetalae</taxon>
        <taxon>asterids</taxon>
        <taxon>lamiids</taxon>
        <taxon>Solanales</taxon>
        <taxon>Solanaceae</taxon>
        <taxon>Nicotianoideae</taxon>
        <taxon>Nicotianeae</taxon>
        <taxon>Nicotiana</taxon>
    </lineage>
</organism>
<keyword id="KW-0150">Chloroplast</keyword>
<keyword id="KW-0186">Copper</keyword>
<keyword id="KW-0903">Direct protein sequencing</keyword>
<keyword id="KW-0249">Electron transport</keyword>
<keyword id="KW-0472">Membrane</keyword>
<keyword id="KW-0479">Metal-binding</keyword>
<keyword id="KW-0934">Plastid</keyword>
<keyword id="KW-1185">Reference proteome</keyword>
<keyword id="KW-0793">Thylakoid</keyword>
<keyword id="KW-0813">Transport</keyword>
<evidence type="ECO:0000250" key="1">
    <source>
        <dbReference type="UniProtKB" id="P18068"/>
    </source>
</evidence>
<evidence type="ECO:0000269" key="2">
    <source>
    </source>
</evidence>
<evidence type="ECO:0000305" key="3"/>